<name>AIM14_ZYGRC</name>
<gene>
    <name type="primary">AIM14</name>
    <name type="ordered locus">ZYRO0E05456g</name>
</gene>
<proteinExistence type="inferred from homology"/>
<dbReference type="EC" id="1.16.1.-"/>
<dbReference type="EMBL" id="CU928181">
    <property type="protein sequence ID" value="CAR30913.1"/>
    <property type="molecule type" value="Genomic_DNA"/>
</dbReference>
<dbReference type="RefSeq" id="XP_002499168.1">
    <property type="nucleotide sequence ID" value="XM_002499123.1"/>
</dbReference>
<dbReference type="SMR" id="C5E4F2"/>
<dbReference type="FunCoup" id="C5E4F2">
    <property type="interactions" value="25"/>
</dbReference>
<dbReference type="GeneID" id="8204720"/>
<dbReference type="KEGG" id="zro:ZYRO0E05456g"/>
<dbReference type="HOGENOM" id="CLU_036508_0_0_1"/>
<dbReference type="InParanoid" id="C5E4F2"/>
<dbReference type="Proteomes" id="UP000008536">
    <property type="component" value="Chromosome E"/>
</dbReference>
<dbReference type="GO" id="GO:0005886">
    <property type="term" value="C:plasma membrane"/>
    <property type="evidence" value="ECO:0007669"/>
    <property type="project" value="TreeGrafter"/>
</dbReference>
<dbReference type="GO" id="GO:0000293">
    <property type="term" value="F:ferric-chelate reductase activity"/>
    <property type="evidence" value="ECO:0007669"/>
    <property type="project" value="TreeGrafter"/>
</dbReference>
<dbReference type="GO" id="GO:0033215">
    <property type="term" value="P:reductive iron assimilation"/>
    <property type="evidence" value="ECO:0007669"/>
    <property type="project" value="TreeGrafter"/>
</dbReference>
<dbReference type="CDD" id="cd06186">
    <property type="entry name" value="NOX_Duox_like_FAD_NADP"/>
    <property type="match status" value="1"/>
</dbReference>
<dbReference type="Gene3D" id="3.40.50.80">
    <property type="entry name" value="Nucleotide-binding domain of ferredoxin-NADP reductase (FNR) module"/>
    <property type="match status" value="1"/>
</dbReference>
<dbReference type="InterPro" id="IPR013112">
    <property type="entry name" value="FAD-bd_8"/>
</dbReference>
<dbReference type="InterPro" id="IPR013130">
    <property type="entry name" value="Fe3_Rdtase_TM_dom"/>
</dbReference>
<dbReference type="InterPro" id="IPR013121">
    <property type="entry name" value="Fe_red_NAD-bd_6"/>
</dbReference>
<dbReference type="InterPro" id="IPR039261">
    <property type="entry name" value="FNR_nucleotide-bd"/>
</dbReference>
<dbReference type="InterPro" id="IPR050369">
    <property type="entry name" value="RBOH/FRE"/>
</dbReference>
<dbReference type="PANTHER" id="PTHR11972:SF198">
    <property type="entry name" value="METALLOREDUCTASE AIM14-RELATED"/>
    <property type="match status" value="1"/>
</dbReference>
<dbReference type="PANTHER" id="PTHR11972">
    <property type="entry name" value="NADPH OXIDASE"/>
    <property type="match status" value="1"/>
</dbReference>
<dbReference type="Pfam" id="PF08022">
    <property type="entry name" value="FAD_binding_8"/>
    <property type="match status" value="1"/>
</dbReference>
<dbReference type="Pfam" id="PF01794">
    <property type="entry name" value="Ferric_reduct"/>
    <property type="match status" value="1"/>
</dbReference>
<dbReference type="Pfam" id="PF08030">
    <property type="entry name" value="NAD_binding_6"/>
    <property type="match status" value="1"/>
</dbReference>
<dbReference type="SFLD" id="SFLDF00463">
    <property type="entry name" value="AIM14"/>
    <property type="match status" value="1"/>
</dbReference>
<dbReference type="SFLD" id="SFLDS00052">
    <property type="entry name" value="Ferric_Reductase_Domain"/>
    <property type="match status" value="1"/>
</dbReference>
<dbReference type="SFLD" id="SFLDG01168">
    <property type="entry name" value="Ferric_reductase_subgroup_(FRE"/>
    <property type="match status" value="1"/>
</dbReference>
<dbReference type="SUPFAM" id="SSF52343">
    <property type="entry name" value="Ferredoxin reductase-like, C-terminal NADP-linked domain"/>
    <property type="match status" value="1"/>
</dbReference>
<feature type="chain" id="PRO_0000408755" description="Probable metalloreductase AIM14">
    <location>
        <begin position="1"/>
        <end position="526"/>
    </location>
</feature>
<feature type="transmembrane region" description="Helical" evidence="2">
    <location>
        <begin position="17"/>
        <end position="37"/>
    </location>
</feature>
<feature type="transmembrane region" description="Helical" evidence="2">
    <location>
        <begin position="60"/>
        <end position="80"/>
    </location>
</feature>
<feature type="transmembrane region" description="Helical" evidence="2">
    <location>
        <begin position="96"/>
        <end position="113"/>
    </location>
</feature>
<feature type="transmembrane region" description="Helical" evidence="2">
    <location>
        <begin position="138"/>
        <end position="158"/>
    </location>
</feature>
<feature type="transmembrane region" description="Helical" evidence="2">
    <location>
        <begin position="172"/>
        <end position="192"/>
    </location>
</feature>
<feature type="transmembrane region" description="Helical" evidence="2">
    <location>
        <begin position="199"/>
        <end position="219"/>
    </location>
</feature>
<feature type="transmembrane region" description="Helical" evidence="2">
    <location>
        <begin position="221"/>
        <end position="241"/>
    </location>
</feature>
<feature type="domain" description="Ferric oxidoreductase">
    <location>
        <begin position="97"/>
        <end position="214"/>
    </location>
</feature>
<feature type="domain" description="FAD-binding FR-type">
    <location>
        <begin position="238"/>
        <end position="370"/>
    </location>
</feature>
<keyword id="KW-0249">Electron transport</keyword>
<keyword id="KW-0274">FAD</keyword>
<keyword id="KW-0285">Flavoprotein</keyword>
<keyword id="KW-0406">Ion transport</keyword>
<keyword id="KW-0472">Membrane</keyword>
<keyword id="KW-0521">NADP</keyword>
<keyword id="KW-0560">Oxidoreductase</keyword>
<keyword id="KW-1185">Reference proteome</keyword>
<keyword id="KW-0812">Transmembrane</keyword>
<keyword id="KW-1133">Transmembrane helix</keyword>
<keyword id="KW-0813">Transport</keyword>
<protein>
    <recommendedName>
        <fullName>Probable metalloreductase AIM14</fullName>
        <ecNumber>1.16.1.-</ecNumber>
    </recommendedName>
</protein>
<evidence type="ECO:0000250" key="1"/>
<evidence type="ECO:0000255" key="2"/>
<evidence type="ECO:0000305" key="3"/>
<reference key="1">
    <citation type="journal article" date="2009" name="Genome Res.">
        <title>Comparative genomics of protoploid Saccharomycetaceae.</title>
        <authorList>
            <consortium name="The Genolevures Consortium"/>
            <person name="Souciet J.-L."/>
            <person name="Dujon B."/>
            <person name="Gaillardin C."/>
            <person name="Johnston M."/>
            <person name="Baret P.V."/>
            <person name="Cliften P."/>
            <person name="Sherman D.J."/>
            <person name="Weissenbach J."/>
            <person name="Westhof E."/>
            <person name="Wincker P."/>
            <person name="Jubin C."/>
            <person name="Poulain J."/>
            <person name="Barbe V."/>
            <person name="Segurens B."/>
            <person name="Artiguenave F."/>
            <person name="Anthouard V."/>
            <person name="Vacherie B."/>
            <person name="Val M.-E."/>
            <person name="Fulton R.S."/>
            <person name="Minx P."/>
            <person name="Wilson R."/>
            <person name="Durrens P."/>
            <person name="Jean G."/>
            <person name="Marck C."/>
            <person name="Martin T."/>
            <person name="Nikolski M."/>
            <person name="Rolland T."/>
            <person name="Seret M.-L."/>
            <person name="Casaregola S."/>
            <person name="Despons L."/>
            <person name="Fairhead C."/>
            <person name="Fischer G."/>
            <person name="Lafontaine I."/>
            <person name="Leh V."/>
            <person name="Lemaire M."/>
            <person name="de Montigny J."/>
            <person name="Neuveglise C."/>
            <person name="Thierry A."/>
            <person name="Blanc-Lenfle I."/>
            <person name="Bleykasten C."/>
            <person name="Diffels J."/>
            <person name="Fritsch E."/>
            <person name="Frangeul L."/>
            <person name="Goeffon A."/>
            <person name="Jauniaux N."/>
            <person name="Kachouri-Lafond R."/>
            <person name="Payen C."/>
            <person name="Potier S."/>
            <person name="Pribylova L."/>
            <person name="Ozanne C."/>
            <person name="Richard G.-F."/>
            <person name="Sacerdot C."/>
            <person name="Straub M.-L."/>
            <person name="Talla E."/>
        </authorList>
    </citation>
    <scope>NUCLEOTIDE SEQUENCE [LARGE SCALE GENOMIC DNA]</scope>
    <source>
        <strain>ATCC 2623 / CBS 732 / BCRC 21506 / NBRC 1130 / NCYC 568 / NRRL Y-229</strain>
    </source>
</reference>
<accession>C5E4F2</accession>
<sequence length="526" mass="59745">MSSELVKRHGHTHYANIPYGYYVLIVSFFYLVFLGVLRIILKPRAAGFNSSKRSRLAQKLYLVNPVVHLPILLVAVLLPFYRHYSISEHATVYIKRLGRLSYALLPLNLLLNLRPNWLLRNNYTYTDLIPLHKWLSRCIIIIAVVHGILFLINWALGESGTLAKKIANPYNLAGVLLFAPLISMIFFSIGPMRRFSYNAFYVIHNLTGISFIFVVAFHARPSVTIPYLLINIAILLWQGFAKFYYAKRTDILSKNTDYQNTNLVNVQLPRMALPDQFEPACHIRISPYSRLHPLYWLYPSHPFTVASLPSDTVVDLIISESHHPKSFKLELGAPYSVINNFDPAVPRSCLEQAKRVAIVCGGSGISFGLPLYRYFKEIHPVEYIQFIWLVKDAYQLKILDKLDTIGLLDGSNDCHAFITRSVDDPNSNQETAPDLEFELESMTQDVVDENGAFVSERDGSPTSKFKFASINLGRRIDWATDLSQFVEPALVDNTWLLTCGPSDLIESGRQYAADNSINFASEIYAL</sequence>
<organism>
    <name type="scientific">Zygosaccharomyces rouxii (strain ATCC 2623 / CBS 732 / NBRC 1130 / NCYC 568 / NRRL Y-229)</name>
    <dbReference type="NCBI Taxonomy" id="559307"/>
    <lineage>
        <taxon>Eukaryota</taxon>
        <taxon>Fungi</taxon>
        <taxon>Dikarya</taxon>
        <taxon>Ascomycota</taxon>
        <taxon>Saccharomycotina</taxon>
        <taxon>Saccharomycetes</taxon>
        <taxon>Saccharomycetales</taxon>
        <taxon>Saccharomycetaceae</taxon>
        <taxon>Zygosaccharomyces</taxon>
    </lineage>
</organism>
<comment type="function">
    <text evidence="1">Probable cell surface metalloreductase. May be involved in iron or copper homeostasis (By similarity).</text>
</comment>
<comment type="subcellular location">
    <subcellularLocation>
        <location evidence="1">Membrane</location>
        <topology evidence="1">Multi-pass membrane protein</topology>
    </subcellularLocation>
</comment>
<comment type="similarity">
    <text evidence="3">Belongs to the ferric reductase (FRE) family. AIM14 subfamily.</text>
</comment>